<proteinExistence type="predicted"/>
<keyword id="KW-0238">DNA-binding</keyword>
<keyword id="KW-1185">Reference proteome</keyword>
<keyword id="KW-0678">Repressor</keyword>
<keyword id="KW-0804">Transcription</keyword>
<keyword id="KW-0805">Transcription regulation</keyword>
<organism>
    <name type="scientific">Bacillus subtilis (strain 168)</name>
    <dbReference type="NCBI Taxonomy" id="224308"/>
    <lineage>
        <taxon>Bacteria</taxon>
        <taxon>Bacillati</taxon>
        <taxon>Bacillota</taxon>
        <taxon>Bacilli</taxon>
        <taxon>Bacillales</taxon>
        <taxon>Bacillaceae</taxon>
        <taxon>Bacillus</taxon>
    </lineage>
</organism>
<sequence length="205" mass="23740">MPKQIDHEKRRKQIAEATWRVILERGMEGASARNIAKEAGLSLGALRHYFSTQDELLAFAMKLVQEKVTDRIKDIAVRDLLPKEKVLQILLEMVPTNEETIREMEVWFAFTAYARHKKDMFDASHDGIFSGMRNLIAYLDESDLLKQNADKDIEAERLYALVDGLALHAMLDPVRVNKDRIKRVIMQHVESICVEDTRETQKRHP</sequence>
<feature type="chain" id="PRO_0000070607" description="HTH-type transcriptional regulator PksA">
    <location>
        <begin position="1"/>
        <end position="205"/>
    </location>
</feature>
<feature type="domain" description="HTH tetR-type" evidence="1">
    <location>
        <begin position="8"/>
        <end position="68"/>
    </location>
</feature>
<feature type="DNA-binding region" description="H-T-H motif" evidence="1">
    <location>
        <begin position="31"/>
        <end position="50"/>
    </location>
</feature>
<gene>
    <name type="primary">pksA</name>
    <name type="ordered locus">BSU17080</name>
</gene>
<protein>
    <recommendedName>
        <fullName>HTH-type transcriptional regulator PksA</fullName>
    </recommendedName>
</protein>
<name>PKSA_BACSU</name>
<dbReference type="EMBL" id="AL009126">
    <property type="protein sequence ID" value="CAB13580.1"/>
    <property type="molecule type" value="Genomic_DNA"/>
</dbReference>
<dbReference type="PIR" id="G69677">
    <property type="entry name" value="G69677"/>
</dbReference>
<dbReference type="RefSeq" id="NP_389589.1">
    <property type="nucleotide sequence ID" value="NC_000964.3"/>
</dbReference>
<dbReference type="RefSeq" id="WP_003231827.1">
    <property type="nucleotide sequence ID" value="NZ_OZ025638.1"/>
</dbReference>
<dbReference type="SMR" id="O34381"/>
<dbReference type="FunCoup" id="O34381">
    <property type="interactions" value="76"/>
</dbReference>
<dbReference type="STRING" id="224308.BSU17080"/>
<dbReference type="PaxDb" id="224308-BSU17080"/>
<dbReference type="DNASU" id="939593"/>
<dbReference type="EnsemblBacteria" id="CAB13580">
    <property type="protein sequence ID" value="CAB13580"/>
    <property type="gene ID" value="BSU_17080"/>
</dbReference>
<dbReference type="GeneID" id="939593"/>
<dbReference type="KEGG" id="bsu:BSU17080"/>
<dbReference type="PATRIC" id="fig|224308.179.peg.1850"/>
<dbReference type="eggNOG" id="COG3226">
    <property type="taxonomic scope" value="Bacteria"/>
</dbReference>
<dbReference type="InParanoid" id="O34381"/>
<dbReference type="OrthoDB" id="9816296at2"/>
<dbReference type="PhylomeDB" id="O34381"/>
<dbReference type="BioCyc" id="BSUB:BSU17080-MONOMER"/>
<dbReference type="Proteomes" id="UP000001570">
    <property type="component" value="Chromosome"/>
</dbReference>
<dbReference type="GO" id="GO:0003700">
    <property type="term" value="F:DNA-binding transcription factor activity"/>
    <property type="evidence" value="ECO:0000318"/>
    <property type="project" value="GO_Central"/>
</dbReference>
<dbReference type="GO" id="GO:0000976">
    <property type="term" value="F:transcription cis-regulatory region binding"/>
    <property type="evidence" value="ECO:0000318"/>
    <property type="project" value="GO_Central"/>
</dbReference>
<dbReference type="GO" id="GO:0006355">
    <property type="term" value="P:regulation of DNA-templated transcription"/>
    <property type="evidence" value="ECO:0000318"/>
    <property type="project" value="GO_Central"/>
</dbReference>
<dbReference type="Gene3D" id="1.10.357.10">
    <property type="entry name" value="Tetracycline Repressor, domain 2"/>
    <property type="match status" value="1"/>
</dbReference>
<dbReference type="InterPro" id="IPR039538">
    <property type="entry name" value="BetI_C"/>
</dbReference>
<dbReference type="InterPro" id="IPR023772">
    <property type="entry name" value="DNA-bd_HTH_TetR-type_CS"/>
</dbReference>
<dbReference type="InterPro" id="IPR009057">
    <property type="entry name" value="Homeodomain-like_sf"/>
</dbReference>
<dbReference type="InterPro" id="IPR050109">
    <property type="entry name" value="HTH-type_TetR-like_transc_reg"/>
</dbReference>
<dbReference type="InterPro" id="IPR001647">
    <property type="entry name" value="HTH_TetR"/>
</dbReference>
<dbReference type="InterPro" id="IPR036271">
    <property type="entry name" value="Tet_transcr_reg_TetR-rel_C_sf"/>
</dbReference>
<dbReference type="PANTHER" id="PTHR30055:SF226">
    <property type="entry name" value="HTH-TYPE TRANSCRIPTIONAL REGULATOR PKSA"/>
    <property type="match status" value="1"/>
</dbReference>
<dbReference type="PANTHER" id="PTHR30055">
    <property type="entry name" value="HTH-TYPE TRANSCRIPTIONAL REGULATOR RUTR"/>
    <property type="match status" value="1"/>
</dbReference>
<dbReference type="Pfam" id="PF13977">
    <property type="entry name" value="TetR_C_6"/>
    <property type="match status" value="1"/>
</dbReference>
<dbReference type="Pfam" id="PF00440">
    <property type="entry name" value="TetR_N"/>
    <property type="match status" value="1"/>
</dbReference>
<dbReference type="PRINTS" id="PR00455">
    <property type="entry name" value="HTHTETR"/>
</dbReference>
<dbReference type="SUPFAM" id="SSF46689">
    <property type="entry name" value="Homeodomain-like"/>
    <property type="match status" value="1"/>
</dbReference>
<dbReference type="SUPFAM" id="SSF48498">
    <property type="entry name" value="Tetracyclin repressor-like, C-terminal domain"/>
    <property type="match status" value="1"/>
</dbReference>
<dbReference type="PROSITE" id="PS01081">
    <property type="entry name" value="HTH_TETR_1"/>
    <property type="match status" value="1"/>
</dbReference>
<dbReference type="PROSITE" id="PS50977">
    <property type="entry name" value="HTH_TETR_2"/>
    <property type="match status" value="1"/>
</dbReference>
<accession>O34381</accession>
<comment type="function">
    <text>Transcriptional regulation of the polyketide synthase operon.</text>
</comment>
<reference key="1">
    <citation type="journal article" date="1997" name="Nature">
        <title>The complete genome sequence of the Gram-positive bacterium Bacillus subtilis.</title>
        <authorList>
            <person name="Kunst F."/>
            <person name="Ogasawara N."/>
            <person name="Moszer I."/>
            <person name="Albertini A.M."/>
            <person name="Alloni G."/>
            <person name="Azevedo V."/>
            <person name="Bertero M.G."/>
            <person name="Bessieres P."/>
            <person name="Bolotin A."/>
            <person name="Borchert S."/>
            <person name="Borriss R."/>
            <person name="Boursier L."/>
            <person name="Brans A."/>
            <person name="Braun M."/>
            <person name="Brignell S.C."/>
            <person name="Bron S."/>
            <person name="Brouillet S."/>
            <person name="Bruschi C.V."/>
            <person name="Caldwell B."/>
            <person name="Capuano V."/>
            <person name="Carter N.M."/>
            <person name="Choi S.-K."/>
            <person name="Codani J.-J."/>
            <person name="Connerton I.F."/>
            <person name="Cummings N.J."/>
            <person name="Daniel R.A."/>
            <person name="Denizot F."/>
            <person name="Devine K.M."/>
            <person name="Duesterhoeft A."/>
            <person name="Ehrlich S.D."/>
            <person name="Emmerson P.T."/>
            <person name="Entian K.-D."/>
            <person name="Errington J."/>
            <person name="Fabret C."/>
            <person name="Ferrari E."/>
            <person name="Foulger D."/>
            <person name="Fritz C."/>
            <person name="Fujita M."/>
            <person name="Fujita Y."/>
            <person name="Fuma S."/>
            <person name="Galizzi A."/>
            <person name="Galleron N."/>
            <person name="Ghim S.-Y."/>
            <person name="Glaser P."/>
            <person name="Goffeau A."/>
            <person name="Golightly E.J."/>
            <person name="Grandi G."/>
            <person name="Guiseppi G."/>
            <person name="Guy B.J."/>
            <person name="Haga K."/>
            <person name="Haiech J."/>
            <person name="Harwood C.R."/>
            <person name="Henaut A."/>
            <person name="Hilbert H."/>
            <person name="Holsappel S."/>
            <person name="Hosono S."/>
            <person name="Hullo M.-F."/>
            <person name="Itaya M."/>
            <person name="Jones L.-M."/>
            <person name="Joris B."/>
            <person name="Karamata D."/>
            <person name="Kasahara Y."/>
            <person name="Klaerr-Blanchard M."/>
            <person name="Klein C."/>
            <person name="Kobayashi Y."/>
            <person name="Koetter P."/>
            <person name="Koningstein G."/>
            <person name="Krogh S."/>
            <person name="Kumano M."/>
            <person name="Kurita K."/>
            <person name="Lapidus A."/>
            <person name="Lardinois S."/>
            <person name="Lauber J."/>
            <person name="Lazarevic V."/>
            <person name="Lee S.-M."/>
            <person name="Levine A."/>
            <person name="Liu H."/>
            <person name="Masuda S."/>
            <person name="Mauel C."/>
            <person name="Medigue C."/>
            <person name="Medina N."/>
            <person name="Mellado R.P."/>
            <person name="Mizuno M."/>
            <person name="Moestl D."/>
            <person name="Nakai S."/>
            <person name="Noback M."/>
            <person name="Noone D."/>
            <person name="O'Reilly M."/>
            <person name="Ogawa K."/>
            <person name="Ogiwara A."/>
            <person name="Oudega B."/>
            <person name="Park S.-H."/>
            <person name="Parro V."/>
            <person name="Pohl T.M."/>
            <person name="Portetelle D."/>
            <person name="Porwollik S."/>
            <person name="Prescott A.M."/>
            <person name="Presecan E."/>
            <person name="Pujic P."/>
            <person name="Purnelle B."/>
            <person name="Rapoport G."/>
            <person name="Rey M."/>
            <person name="Reynolds S."/>
            <person name="Rieger M."/>
            <person name="Rivolta C."/>
            <person name="Rocha E."/>
            <person name="Roche B."/>
            <person name="Rose M."/>
            <person name="Sadaie Y."/>
            <person name="Sato T."/>
            <person name="Scanlan E."/>
            <person name="Schleich S."/>
            <person name="Schroeter R."/>
            <person name="Scoffone F."/>
            <person name="Sekiguchi J."/>
            <person name="Sekowska A."/>
            <person name="Seror S.J."/>
            <person name="Serror P."/>
            <person name="Shin B.-S."/>
            <person name="Soldo B."/>
            <person name="Sorokin A."/>
            <person name="Tacconi E."/>
            <person name="Takagi T."/>
            <person name="Takahashi H."/>
            <person name="Takemaru K."/>
            <person name="Takeuchi M."/>
            <person name="Tamakoshi A."/>
            <person name="Tanaka T."/>
            <person name="Terpstra P."/>
            <person name="Tognoni A."/>
            <person name="Tosato V."/>
            <person name="Uchiyama S."/>
            <person name="Vandenbol M."/>
            <person name="Vannier F."/>
            <person name="Vassarotti A."/>
            <person name="Viari A."/>
            <person name="Wambutt R."/>
            <person name="Wedler E."/>
            <person name="Wedler H."/>
            <person name="Weitzenegger T."/>
            <person name="Winters P."/>
            <person name="Wipat A."/>
            <person name="Yamamoto H."/>
            <person name="Yamane K."/>
            <person name="Yasumoto K."/>
            <person name="Yata K."/>
            <person name="Yoshida K."/>
            <person name="Yoshikawa H.-F."/>
            <person name="Zumstein E."/>
            <person name="Yoshikawa H."/>
            <person name="Danchin A."/>
        </authorList>
    </citation>
    <scope>NUCLEOTIDE SEQUENCE [LARGE SCALE GENOMIC DNA]</scope>
    <source>
        <strain>168</strain>
    </source>
</reference>
<reference key="2">
    <citation type="journal article" date="2005" name="Microbiol. Mol. Biol. Rev.">
        <title>The TetR family of transcriptional repressors.</title>
        <authorList>
            <person name="Ramos J.L."/>
            <person name="Martinez-Bueno M."/>
            <person name="Molina-Henares A.J."/>
            <person name="Teran W."/>
            <person name="Watanabe K."/>
            <person name="Zhang X."/>
            <person name="Gallegos M.T."/>
            <person name="Brennan R."/>
            <person name="Tobes R."/>
        </authorList>
    </citation>
    <scope>REVIEW</scope>
    <scope>GENE FAMILY</scope>
</reference>
<evidence type="ECO:0000255" key="1">
    <source>
        <dbReference type="PROSITE-ProRule" id="PRU00335"/>
    </source>
</evidence>